<name>SDHA_RICTY</name>
<gene>
    <name type="primary">sdhA</name>
    <name type="ordered locus">RT0117</name>
</gene>
<organism>
    <name type="scientific">Rickettsia typhi (strain ATCC VR-144 / Wilmington)</name>
    <dbReference type="NCBI Taxonomy" id="257363"/>
    <lineage>
        <taxon>Bacteria</taxon>
        <taxon>Pseudomonadati</taxon>
        <taxon>Pseudomonadota</taxon>
        <taxon>Alphaproteobacteria</taxon>
        <taxon>Rickettsiales</taxon>
        <taxon>Rickettsiaceae</taxon>
        <taxon>Rickettsieae</taxon>
        <taxon>Rickettsia</taxon>
        <taxon>typhus group</taxon>
    </lineage>
</organism>
<accession>Q68XN9</accession>
<feature type="chain" id="PRO_0000280978" description="Succinate dehydrogenase flavoprotein subunit">
    <location>
        <begin position="1"/>
        <end position="596"/>
    </location>
</feature>
<feature type="active site" description="Proton acceptor" evidence="1">
    <location>
        <position position="290"/>
    </location>
</feature>
<feature type="binding site" evidence="1">
    <location>
        <begin position="18"/>
        <end position="23"/>
    </location>
    <ligand>
        <name>FAD</name>
        <dbReference type="ChEBI" id="CHEBI:57692"/>
    </ligand>
</feature>
<feature type="binding site" evidence="1">
    <location>
        <begin position="41"/>
        <end position="56"/>
    </location>
    <ligand>
        <name>FAD</name>
        <dbReference type="ChEBI" id="CHEBI:57692"/>
    </ligand>
</feature>
<feature type="binding site" evidence="1">
    <location>
        <position position="225"/>
    </location>
    <ligand>
        <name>FAD</name>
        <dbReference type="ChEBI" id="CHEBI:57692"/>
    </ligand>
</feature>
<feature type="binding site" evidence="1">
    <location>
        <position position="246"/>
    </location>
    <ligand>
        <name>substrate</name>
    </ligand>
</feature>
<feature type="binding site" evidence="1">
    <location>
        <position position="258"/>
    </location>
    <ligand>
        <name>substrate</name>
    </ligand>
</feature>
<feature type="binding site" evidence="1">
    <location>
        <position position="357"/>
    </location>
    <ligand>
        <name>substrate</name>
    </ligand>
</feature>
<feature type="binding site" evidence="1">
    <location>
        <position position="391"/>
    </location>
    <ligand>
        <name>FAD</name>
        <dbReference type="ChEBI" id="CHEBI:57692"/>
    </ligand>
</feature>
<feature type="binding site" evidence="1">
    <location>
        <position position="402"/>
    </location>
    <ligand>
        <name>substrate</name>
    </ligand>
</feature>
<feature type="binding site" evidence="1">
    <location>
        <begin position="407"/>
        <end position="408"/>
    </location>
    <ligand>
        <name>FAD</name>
        <dbReference type="ChEBI" id="CHEBI:57692"/>
    </ligand>
</feature>
<feature type="modified residue" description="Tele-8alpha-FAD histidine" evidence="1">
    <location>
        <position position="49"/>
    </location>
</feature>
<evidence type="ECO:0000250" key="1">
    <source>
        <dbReference type="UniProtKB" id="P0AC41"/>
    </source>
</evidence>
<evidence type="ECO:0000305" key="2"/>
<sequence length="596" mass="65743">MTKAYNIIHHKFDVVVVGAGGAGLRSAFGMAKEGLNTACITKIFPTRSHTVAAQGGISAALGNMGEDDWRWHMYDTVKGSDWLGDQDAIEYMCKNAPDAILELEHYGVPFSRTEDGKIYQRPFGGMTTEYGKGKAAQRTCAAADRTGHAILHTLYQQSLKHKVQFFIEYFAIDLLMEDGECRGVVAWNLDDGSLHCFRAHNVVLATGGYGRAYFSATSAHTCTGDGGGMVIRAGLPLQDMEFVQFHPTGIYSAGCLITEGARGEGGYLVNANGERFMERYAPAAKDLASRDVVSRAMTIEIREGRGVGEYKDHVFLHLNHLSPEILHRRLPGISETAKIFAGVDVTKDPIPVLPTVHYNMGGIPTNYHGQVIIKDGKNHNSIVNGIMAIGEAACVSVHGANRLGSNSLLDLVVFGRSSALKAAELIKPVSPHKPLKKEILEKIINRFDKIRHANGNVLVADLRLQMQRTMQSHVSVFRTQELLDEGARMISEIRNRYKDIKINDKSLIWNSDLVEALELDNLLDQALVTVYSAAARKESRGAHAREDYPDRNDIDWIKHTLSSIDDSGQIILDYKPVTLTTLTDEISTIPPVKRIY</sequence>
<reference key="1">
    <citation type="journal article" date="2004" name="J. Bacteriol.">
        <title>Complete genome sequence of Rickettsia typhi and comparison with sequences of other Rickettsiae.</title>
        <authorList>
            <person name="McLeod M.P."/>
            <person name="Qin X."/>
            <person name="Karpathy S.E."/>
            <person name="Gioia J."/>
            <person name="Highlander S.K."/>
            <person name="Fox G.E."/>
            <person name="McNeill T.Z."/>
            <person name="Jiang H."/>
            <person name="Muzny D."/>
            <person name="Jacob L.S."/>
            <person name="Hawes A.C."/>
            <person name="Sodergren E."/>
            <person name="Gill R."/>
            <person name="Hume J."/>
            <person name="Morgan M."/>
            <person name="Fan G."/>
            <person name="Amin A.G."/>
            <person name="Gibbs R.A."/>
            <person name="Hong C."/>
            <person name="Yu X.-J."/>
            <person name="Walker D.H."/>
            <person name="Weinstock G.M."/>
        </authorList>
    </citation>
    <scope>NUCLEOTIDE SEQUENCE [LARGE SCALE GENOMIC DNA]</scope>
    <source>
        <strain>ATCC VR-144 / Wilmington</strain>
    </source>
</reference>
<protein>
    <recommendedName>
        <fullName>Succinate dehydrogenase flavoprotein subunit</fullName>
        <ecNumber evidence="1">1.3.5.1</ecNumber>
    </recommendedName>
</protein>
<dbReference type="EC" id="1.3.5.1" evidence="1"/>
<dbReference type="EMBL" id="AE017197">
    <property type="protein sequence ID" value="AAU03603.1"/>
    <property type="molecule type" value="Genomic_DNA"/>
</dbReference>
<dbReference type="RefSeq" id="WP_011190590.1">
    <property type="nucleotide sequence ID" value="NC_006142.1"/>
</dbReference>
<dbReference type="SMR" id="Q68XN9"/>
<dbReference type="KEGG" id="rty:RT0117"/>
<dbReference type="eggNOG" id="COG1053">
    <property type="taxonomic scope" value="Bacteria"/>
</dbReference>
<dbReference type="HOGENOM" id="CLU_014312_6_1_5"/>
<dbReference type="OrthoDB" id="9806724at2"/>
<dbReference type="UniPathway" id="UPA00223">
    <property type="reaction ID" value="UER01005"/>
</dbReference>
<dbReference type="Proteomes" id="UP000000604">
    <property type="component" value="Chromosome"/>
</dbReference>
<dbReference type="GO" id="GO:0005886">
    <property type="term" value="C:plasma membrane"/>
    <property type="evidence" value="ECO:0007669"/>
    <property type="project" value="UniProtKB-SubCell"/>
</dbReference>
<dbReference type="GO" id="GO:0009055">
    <property type="term" value="F:electron transfer activity"/>
    <property type="evidence" value="ECO:0007669"/>
    <property type="project" value="TreeGrafter"/>
</dbReference>
<dbReference type="GO" id="GO:0050660">
    <property type="term" value="F:flavin adenine dinucleotide binding"/>
    <property type="evidence" value="ECO:0007669"/>
    <property type="project" value="InterPro"/>
</dbReference>
<dbReference type="GO" id="GO:0008177">
    <property type="term" value="F:succinate dehydrogenase (quinone) activity"/>
    <property type="evidence" value="ECO:0007669"/>
    <property type="project" value="UniProtKB-EC"/>
</dbReference>
<dbReference type="GO" id="GO:0022900">
    <property type="term" value="P:electron transport chain"/>
    <property type="evidence" value="ECO:0007669"/>
    <property type="project" value="InterPro"/>
</dbReference>
<dbReference type="GO" id="GO:0006099">
    <property type="term" value="P:tricarboxylic acid cycle"/>
    <property type="evidence" value="ECO:0007669"/>
    <property type="project" value="UniProtKB-UniPathway"/>
</dbReference>
<dbReference type="FunFam" id="3.90.700.10:FF:000001">
    <property type="entry name" value="Mitochondrial succinate dehydrogenase flavoprotein subunit"/>
    <property type="match status" value="1"/>
</dbReference>
<dbReference type="FunFam" id="4.10.80.40:FF:000002">
    <property type="entry name" value="Succinate dehydrogenase [ubiquinone] flavoprotein subunit, mitochondrial"/>
    <property type="match status" value="1"/>
</dbReference>
<dbReference type="FunFam" id="3.50.50.60:FF:000026">
    <property type="entry name" value="Succinate dehydrogenase flavoprotein subunit"/>
    <property type="match status" value="1"/>
</dbReference>
<dbReference type="FunFam" id="1.20.58.100:FF:000001">
    <property type="entry name" value="Succinate dehydrogenase flavoprotein subunit (SdhA)"/>
    <property type="match status" value="1"/>
</dbReference>
<dbReference type="Gene3D" id="3.50.50.60">
    <property type="entry name" value="FAD/NAD(P)-binding domain"/>
    <property type="match status" value="1"/>
</dbReference>
<dbReference type="Gene3D" id="1.20.58.100">
    <property type="entry name" value="Fumarate reductase/succinate dehydrogenase flavoprotein-like, C-terminal domain"/>
    <property type="match status" value="1"/>
</dbReference>
<dbReference type="Gene3D" id="4.10.80.40">
    <property type="entry name" value="succinate dehydrogenase protein domain"/>
    <property type="match status" value="1"/>
</dbReference>
<dbReference type="Gene3D" id="3.90.700.10">
    <property type="entry name" value="Succinate dehydrogenase/fumarate reductase flavoprotein, catalytic domain"/>
    <property type="match status" value="1"/>
</dbReference>
<dbReference type="InterPro" id="IPR003953">
    <property type="entry name" value="FAD-dep_OxRdtase_2_FAD-bd"/>
</dbReference>
<dbReference type="InterPro" id="IPR036188">
    <property type="entry name" value="FAD/NAD-bd_sf"/>
</dbReference>
<dbReference type="InterPro" id="IPR003952">
    <property type="entry name" value="FRD_SDH_FAD_BS"/>
</dbReference>
<dbReference type="InterPro" id="IPR037099">
    <property type="entry name" value="Fum_R/Succ_DH_flav-like_C_sf"/>
</dbReference>
<dbReference type="InterPro" id="IPR015939">
    <property type="entry name" value="Fum_Rdtase/Succ_DH_flav-like_C"/>
</dbReference>
<dbReference type="InterPro" id="IPR030664">
    <property type="entry name" value="SdhA/FrdA/AprA"/>
</dbReference>
<dbReference type="InterPro" id="IPR027477">
    <property type="entry name" value="Succ_DH/fumarate_Rdtase_cat_sf"/>
</dbReference>
<dbReference type="InterPro" id="IPR011281">
    <property type="entry name" value="Succ_DH_flav_su_fwd"/>
</dbReference>
<dbReference type="InterPro" id="IPR014006">
    <property type="entry name" value="Succ_Dhase_FrdA_Gneg"/>
</dbReference>
<dbReference type="NCBIfam" id="TIGR01816">
    <property type="entry name" value="sdhA_forward"/>
    <property type="match status" value="1"/>
</dbReference>
<dbReference type="NCBIfam" id="TIGR01812">
    <property type="entry name" value="sdhA_frdA_Gneg"/>
    <property type="match status" value="1"/>
</dbReference>
<dbReference type="PANTHER" id="PTHR11632">
    <property type="entry name" value="SUCCINATE DEHYDROGENASE 2 FLAVOPROTEIN SUBUNIT"/>
    <property type="match status" value="1"/>
</dbReference>
<dbReference type="PANTHER" id="PTHR11632:SF51">
    <property type="entry name" value="SUCCINATE DEHYDROGENASE [UBIQUINONE] FLAVOPROTEIN SUBUNIT, MITOCHONDRIAL"/>
    <property type="match status" value="1"/>
</dbReference>
<dbReference type="Pfam" id="PF00890">
    <property type="entry name" value="FAD_binding_2"/>
    <property type="match status" value="1"/>
</dbReference>
<dbReference type="Pfam" id="PF02910">
    <property type="entry name" value="Succ_DH_flav_C"/>
    <property type="match status" value="1"/>
</dbReference>
<dbReference type="PIRSF" id="PIRSF000171">
    <property type="entry name" value="SDHA_APRA_LASPO"/>
    <property type="match status" value="1"/>
</dbReference>
<dbReference type="SUPFAM" id="SSF51905">
    <property type="entry name" value="FAD/NAD(P)-binding domain"/>
    <property type="match status" value="1"/>
</dbReference>
<dbReference type="SUPFAM" id="SSF46977">
    <property type="entry name" value="Succinate dehydrogenase/fumarate reductase flavoprotein C-terminal domain"/>
    <property type="match status" value="1"/>
</dbReference>
<dbReference type="SUPFAM" id="SSF56425">
    <property type="entry name" value="Succinate dehydrogenase/fumarate reductase flavoprotein, catalytic domain"/>
    <property type="match status" value="1"/>
</dbReference>
<dbReference type="PROSITE" id="PS00504">
    <property type="entry name" value="FRD_SDH_FAD_BINDING"/>
    <property type="match status" value="1"/>
</dbReference>
<comment type="catalytic activity">
    <reaction evidence="1">
        <text>a quinone + succinate = fumarate + a quinol</text>
        <dbReference type="Rhea" id="RHEA:40523"/>
        <dbReference type="ChEBI" id="CHEBI:24646"/>
        <dbReference type="ChEBI" id="CHEBI:29806"/>
        <dbReference type="ChEBI" id="CHEBI:30031"/>
        <dbReference type="ChEBI" id="CHEBI:132124"/>
        <dbReference type="EC" id="1.3.5.1"/>
    </reaction>
</comment>
<comment type="cofactor">
    <cofactor evidence="1">
        <name>FAD</name>
        <dbReference type="ChEBI" id="CHEBI:57692"/>
    </cofactor>
</comment>
<comment type="pathway">
    <text evidence="1">Carbohydrate metabolism; tricarboxylic acid cycle; fumarate from succinate (bacterial route): step 1/1.</text>
</comment>
<comment type="subunit">
    <text evidence="1">Part of an enzyme complex containing four subunits: a flavoprotein, an iron-sulfur, cytochrome b-556, and a hydrophobic anchor protein.</text>
</comment>
<comment type="subcellular location">
    <subcellularLocation>
        <location evidence="1">Cell inner membrane</location>
        <topology evidence="1">Peripheral membrane protein</topology>
        <orientation evidence="1">Cytoplasmic side</orientation>
    </subcellularLocation>
</comment>
<comment type="similarity">
    <text evidence="2">Belongs to the FAD-dependent oxidoreductase 2 family. FRD/SDH subfamily.</text>
</comment>
<keyword id="KW-0997">Cell inner membrane</keyword>
<keyword id="KW-1003">Cell membrane</keyword>
<keyword id="KW-0249">Electron transport</keyword>
<keyword id="KW-0274">FAD</keyword>
<keyword id="KW-0285">Flavoprotein</keyword>
<keyword id="KW-0472">Membrane</keyword>
<keyword id="KW-0560">Oxidoreductase</keyword>
<keyword id="KW-0813">Transport</keyword>
<keyword id="KW-0816">Tricarboxylic acid cycle</keyword>
<proteinExistence type="inferred from homology"/>